<organism>
    <name type="scientific">Enterobacter sp. (strain 638)</name>
    <dbReference type="NCBI Taxonomy" id="399742"/>
    <lineage>
        <taxon>Bacteria</taxon>
        <taxon>Pseudomonadati</taxon>
        <taxon>Pseudomonadota</taxon>
        <taxon>Gammaproteobacteria</taxon>
        <taxon>Enterobacterales</taxon>
        <taxon>Enterobacteriaceae</taxon>
        <taxon>Enterobacter</taxon>
    </lineage>
</organism>
<protein>
    <recommendedName>
        <fullName evidence="1">Putative double-stranded DNA mimic protein Ent638_2296</fullName>
    </recommendedName>
</protein>
<reference key="1">
    <citation type="journal article" date="2010" name="PLoS Genet.">
        <title>Genome sequence of the plant growth promoting endophytic bacterium Enterobacter sp. 638.</title>
        <authorList>
            <person name="Taghavi S."/>
            <person name="van der Lelie D."/>
            <person name="Hoffman A."/>
            <person name="Zhang Y.B."/>
            <person name="Walla M.D."/>
            <person name="Vangronsveld J."/>
            <person name="Newman L."/>
            <person name="Monchy S."/>
        </authorList>
    </citation>
    <scope>NUCLEOTIDE SEQUENCE [LARGE SCALE GENOMIC DNA]</scope>
    <source>
        <strain>638</strain>
    </source>
</reference>
<comment type="function">
    <text evidence="1">May act as a double-stranded DNA (dsDNA) mimic. Probably regulates the activity of a dsDNA-binding protein.</text>
</comment>
<comment type="similarity">
    <text evidence="1">Belongs to the putative dsDNA mimic protein family.</text>
</comment>
<evidence type="ECO:0000255" key="1">
    <source>
        <dbReference type="HAMAP-Rule" id="MF_00680"/>
    </source>
</evidence>
<dbReference type="EMBL" id="CP000653">
    <property type="protein sequence ID" value="ABP60965.1"/>
    <property type="molecule type" value="Genomic_DNA"/>
</dbReference>
<dbReference type="RefSeq" id="WP_012017679.1">
    <property type="nucleotide sequence ID" value="NC_009436.1"/>
</dbReference>
<dbReference type="SMR" id="A4WB85"/>
<dbReference type="STRING" id="399742.Ent638_2296"/>
<dbReference type="KEGG" id="ent:Ent638_2296"/>
<dbReference type="eggNOG" id="COG3099">
    <property type="taxonomic scope" value="Bacteria"/>
</dbReference>
<dbReference type="HOGENOM" id="CLU_143392_0_0_6"/>
<dbReference type="OrthoDB" id="5677388at2"/>
<dbReference type="Proteomes" id="UP000000230">
    <property type="component" value="Chromosome"/>
</dbReference>
<dbReference type="Gene3D" id="3.10.450.140">
    <property type="entry name" value="dsDNA mimic, putative"/>
    <property type="match status" value="1"/>
</dbReference>
<dbReference type="HAMAP" id="MF_00680">
    <property type="entry name" value="Put_dsDNA_mimic"/>
    <property type="match status" value="1"/>
</dbReference>
<dbReference type="InterPro" id="IPR007376">
    <property type="entry name" value="dsDNA_mimic_put"/>
</dbReference>
<dbReference type="InterPro" id="IPR036763">
    <property type="entry name" value="Put_dsDNA_mimic_sf"/>
</dbReference>
<dbReference type="NCBIfam" id="NF003469">
    <property type="entry name" value="PRK05094.1"/>
    <property type="match status" value="1"/>
</dbReference>
<dbReference type="Pfam" id="PF04269">
    <property type="entry name" value="DUF440"/>
    <property type="match status" value="1"/>
</dbReference>
<dbReference type="PIRSF" id="PIRSF004916">
    <property type="entry name" value="UCP004916"/>
    <property type="match status" value="1"/>
</dbReference>
<dbReference type="SUPFAM" id="SSF102816">
    <property type="entry name" value="Putative dsDNA mimic"/>
    <property type="match status" value="1"/>
</dbReference>
<name>Y2296_ENT38</name>
<gene>
    <name type="ordered locus">Ent638_2296</name>
</gene>
<feature type="chain" id="PRO_1000061971" description="Putative double-stranded DNA mimic protein Ent638_2296">
    <location>
        <begin position="1"/>
        <end position="109"/>
    </location>
</feature>
<sequence>MEMDLNNRLTEDETLEQAYDIFLELAMDNLDPADVILFNLQFEERGGAELFDPSEDWSEHVDFDLNPDFFAEVVIGLAETDGGEINDIFARVLLCREKDHKLCHILWRE</sequence>
<accession>A4WB85</accession>
<proteinExistence type="inferred from homology"/>